<reference key="1">
    <citation type="journal article" date="1995" name="Biosci. Biotechnol. Biochem.">
        <title>Cloning, sequencing, and heterologous expression of a gene coding for Arthromyces ramosus peroxidase.</title>
        <authorList>
            <person name="Sawai-Hatanaka H."/>
            <person name="Ashikari T."/>
            <person name="Tanaka Y."/>
            <person name="Asada Y."/>
            <person name="Nakayama T."/>
            <person name="Minakata H."/>
            <person name="Kunishima N."/>
            <person name="Fukuyama K."/>
            <person name="Yamada H."/>
            <person name="Shibano Y."/>
            <person name="Amachi T."/>
        </authorList>
    </citation>
    <scope>NUCLEOTIDE SEQUENCE [MRNA]</scope>
</reference>
<reference key="2">
    <citation type="journal article" date="1992" name="Biochim. Biophys. Acta">
        <title>Comparison of structure and activities of peroxidases from Coprinus cinereus, Coprinus macrorhizus and Arthromyces ramosus.</title>
        <authorList>
            <person name="Kjalke M."/>
            <person name="Andersen M.B."/>
            <person name="Schneider P."/>
            <person name="Christensen B."/>
            <person name="Schuelein M."/>
            <person name="Welinder K.G."/>
        </authorList>
    </citation>
    <scope>PROTEIN SEQUENCE OF 162-186</scope>
    <scope>GLYCOSYLATION AT ASN-163</scope>
</reference>
<reference key="3">
    <citation type="journal article" date="1994" name="J. Mol. Biol.">
        <title>Crystal structure of the fungal peroxidase from Arthromyces ramosus at 1.9-A resolution. Structural comparisons with the lignin and cytochrome c peroxidases.</title>
        <authorList>
            <person name="Kunishima N."/>
            <person name="Fukuyama K."/>
            <person name="Matsubara H."/>
            <person name="Hatanaka H."/>
            <person name="Shibano Y."/>
            <person name="Amachi T."/>
        </authorList>
    </citation>
    <scope>X-RAY CRYSTALLOGRAPHY (1.9 ANGSTROMS)</scope>
    <scope>PYROGLUTAMATE FORMATION AT GLN-21</scope>
</reference>
<reference key="4">
    <citation type="journal article" date="1997" name="FEBS Lett.">
        <title>Binding mode of benzhydroxamic acid to Arthromyces ramosus peroxidase shown by X-ray crystallographic analysis of the complex at 1.6-A resolution.</title>
        <authorList>
            <person name="Itakura H."/>
            <person name="Oda Y."/>
            <person name="Fukuyama K."/>
        </authorList>
    </citation>
    <scope>X-RAY CRYSTALLOGRAPHY (1.6 ANGSTROMS)</scope>
</reference>
<reference key="5">
    <citation type="journal article" date="1999" name="Biochemistry">
        <title>Binding of salicylhydroxamic acid and several aromatic donor molecules to Arthromyces ramosus peroxidase, investigated by X-ray crystallography, optical difference spectroscopy, NMR relaxation, molecular dynamics, and kinetics.</title>
        <authorList>
            <person name="Tsukamoto K."/>
            <person name="Itakura H."/>
            <person name="Sato K."/>
            <person name="Fukuyama K."/>
            <person name="Miura S."/>
            <person name="Takahashi S."/>
            <person name="Ikezawa H."/>
            <person name="Hosoya T."/>
        </authorList>
    </citation>
    <scope>X-RAY CRYSTALLOGRAPHY (1.9 ANGSTROMS) OF 36-350</scope>
</reference>
<reference key="6">
    <citation type="journal article" date="2000" name="J. Biol. Chem.">
        <title>Direct binding of hydroxylamine to the heme iron of Arthromyces ramosus peroxidase. Substrate analogue that inhibits compound I formation in a competitive manner.</title>
        <authorList>
            <person name="Wariishi H."/>
            <person name="Nonaka D."/>
            <person name="Johjima T."/>
            <person name="Nakamura N."/>
            <person name="Naruta Y."/>
            <person name="Kubo S."/>
            <person name="Fukuyama K."/>
        </authorList>
    </citation>
    <scope>X-RAY CRYSTALLOGRAPHY (2.0 ANGSTROMS) OF 29-364</scope>
</reference>
<accession>P28313</accession>
<sequence length="364" mass="37746">MKLSLFSTFAAVIIGALALPQGPGGGGGSVTCPGGQSTSNSQCCVWFDVLDDLQTNFYQGSKCESPVRKILRIVFHDAIGFSPALTAAGQFGGGGADGSIIAHSNIELAFPANGGLTDTIEALRAVGINHGVSFGDLIQFATAVGMSNCPGSPRLEFLTGRSNSSQPSPPSLIPGPGNTVTAILDRMGDAGFSPDEVVDLLAAHSLASQEGLNSAIFRSPLDSTPQVFDTQFYIETLLKGTTQPGPSLGFAEELSPFPGEFRMRSDALLARDSRTACRWQSMTSSNEVMGQRYRAAMAKMSVLGFDRNALTDCSDVIPSAVSNNAAPVIPGGLTVDDIEVSCPSEPFPEIATASGPLPSLAPAP</sequence>
<keyword id="KW-0002">3D-structure</keyword>
<keyword id="KW-0106">Calcium</keyword>
<keyword id="KW-0903">Direct protein sequencing</keyword>
<keyword id="KW-1015">Disulfide bond</keyword>
<keyword id="KW-0325">Glycoprotein</keyword>
<keyword id="KW-0349">Heme</keyword>
<keyword id="KW-0376">Hydrogen peroxide</keyword>
<keyword id="KW-0408">Iron</keyword>
<keyword id="KW-0479">Metal-binding</keyword>
<keyword id="KW-0560">Oxidoreductase</keyword>
<keyword id="KW-0575">Peroxidase</keyword>
<keyword id="KW-0873">Pyrrolidone carboxylic acid</keyword>
<keyword id="KW-0964">Secreted</keyword>
<keyword id="KW-0732">Signal</keyword>
<feature type="signal peptide">
    <location>
        <begin position="1"/>
        <end position="20"/>
    </location>
</feature>
<feature type="chain" id="PRO_0000023666" description="Peroxidase">
    <location>
        <begin position="21"/>
        <end position="364"/>
    </location>
</feature>
<feature type="active site" description="Proton acceptor">
    <location>
        <position position="76"/>
    </location>
</feature>
<feature type="binding site">
    <location>
        <position position="77"/>
    </location>
    <ligand>
        <name>Ca(2+)</name>
        <dbReference type="ChEBI" id="CHEBI:29108"/>
        <label>1</label>
    </ligand>
</feature>
<feature type="binding site">
    <location>
        <position position="95"/>
    </location>
    <ligand>
        <name>Ca(2+)</name>
        <dbReference type="ChEBI" id="CHEBI:29108"/>
        <label>1</label>
    </ligand>
</feature>
<feature type="binding site">
    <location>
        <position position="97"/>
    </location>
    <ligand>
        <name>Ca(2+)</name>
        <dbReference type="ChEBI" id="CHEBI:29108"/>
        <label>1</label>
    </ligand>
</feature>
<feature type="binding site">
    <location>
        <position position="99"/>
    </location>
    <ligand>
        <name>Ca(2+)</name>
        <dbReference type="ChEBI" id="CHEBI:29108"/>
        <label>1</label>
    </ligand>
</feature>
<feature type="binding site" description="axial binding residue">
    <location>
        <position position="204"/>
    </location>
    <ligand>
        <name>heme b</name>
        <dbReference type="ChEBI" id="CHEBI:60344"/>
    </ligand>
    <ligandPart>
        <name>Fe</name>
        <dbReference type="ChEBI" id="CHEBI:18248"/>
    </ligandPart>
</feature>
<feature type="binding site">
    <location>
        <position position="205"/>
    </location>
    <ligand>
        <name>Ca(2+)</name>
        <dbReference type="ChEBI" id="CHEBI:29108"/>
        <label>2</label>
    </ligand>
</feature>
<feature type="binding site">
    <location>
        <position position="222"/>
    </location>
    <ligand>
        <name>Ca(2+)</name>
        <dbReference type="ChEBI" id="CHEBI:29108"/>
        <label>2</label>
    </ligand>
</feature>
<feature type="binding site">
    <location>
        <position position="224"/>
    </location>
    <ligand>
        <name>Ca(2+)</name>
        <dbReference type="ChEBI" id="CHEBI:29108"/>
        <label>2</label>
    </ligand>
</feature>
<feature type="binding site">
    <location>
        <position position="227"/>
    </location>
    <ligand>
        <name>Ca(2+)</name>
        <dbReference type="ChEBI" id="CHEBI:29108"/>
        <label>2</label>
    </ligand>
</feature>
<feature type="binding site">
    <location>
        <position position="229"/>
    </location>
    <ligand>
        <name>Ca(2+)</name>
        <dbReference type="ChEBI" id="CHEBI:29108"/>
        <label>2</label>
    </ligand>
</feature>
<feature type="site" description="Transition state stabilizer">
    <location>
        <position position="72"/>
    </location>
</feature>
<feature type="modified residue" description="Pyrrolidone carboxylic acid" evidence="2">
    <location>
        <position position="21"/>
    </location>
</feature>
<feature type="glycosylation site" description="N-linked (GlcNAc...) (high mannose) asparagine" evidence="1">
    <location>
        <position position="163"/>
    </location>
</feature>
<feature type="disulfide bond">
    <location>
        <begin position="32"/>
        <end position="44"/>
    </location>
</feature>
<feature type="disulfide bond">
    <location>
        <begin position="43"/>
        <end position="313"/>
    </location>
</feature>
<feature type="disulfide bond">
    <location>
        <begin position="63"/>
        <end position="149"/>
    </location>
</feature>
<feature type="disulfide bond">
    <location>
        <begin position="277"/>
        <end position="342"/>
    </location>
</feature>
<feature type="strand" evidence="7">
    <location>
        <begin position="37"/>
        <end position="39"/>
    </location>
</feature>
<feature type="helix" evidence="7">
    <location>
        <begin position="41"/>
        <end position="43"/>
    </location>
</feature>
<feature type="helix" evidence="7">
    <location>
        <begin position="44"/>
        <end position="55"/>
    </location>
</feature>
<feature type="turn" evidence="7">
    <location>
        <begin position="56"/>
        <end position="61"/>
    </location>
</feature>
<feature type="helix" evidence="7">
    <location>
        <begin position="65"/>
        <end position="78"/>
    </location>
</feature>
<feature type="helix" evidence="7">
    <location>
        <begin position="83"/>
        <end position="87"/>
    </location>
</feature>
<feature type="strand" evidence="7">
    <location>
        <begin position="95"/>
        <end position="98"/>
    </location>
</feature>
<feature type="helix" evidence="7">
    <location>
        <begin position="99"/>
        <end position="102"/>
    </location>
</feature>
<feature type="helix" evidence="7">
    <location>
        <begin position="104"/>
        <end position="107"/>
    </location>
</feature>
<feature type="helix" evidence="7">
    <location>
        <begin position="111"/>
        <end position="113"/>
    </location>
</feature>
<feature type="helix" evidence="7">
    <location>
        <begin position="117"/>
        <end position="130"/>
    </location>
</feature>
<feature type="helix" evidence="7">
    <location>
        <begin position="134"/>
        <end position="147"/>
    </location>
</feature>
<feature type="helix" evidence="7">
    <location>
        <begin position="180"/>
        <end position="190"/>
    </location>
</feature>
<feature type="helix" evidence="7">
    <location>
        <begin position="194"/>
        <end position="200"/>
    </location>
</feature>
<feature type="helix" evidence="7">
    <location>
        <begin position="201"/>
        <end position="205"/>
    </location>
</feature>
<feature type="strand" evidence="7">
    <location>
        <begin position="208"/>
        <end position="212"/>
    </location>
</feature>
<feature type="helix" evidence="5">
    <location>
        <begin position="214"/>
        <end position="216"/>
    </location>
</feature>
<feature type="strand" evidence="7">
    <location>
        <begin position="219"/>
        <end position="223"/>
    </location>
</feature>
<feature type="helix" evidence="7">
    <location>
        <begin position="231"/>
        <end position="236"/>
    </location>
</feature>
<feature type="strand" evidence="7">
    <location>
        <begin position="245"/>
        <end position="247"/>
    </location>
</feature>
<feature type="strand" evidence="7">
    <location>
        <begin position="255"/>
        <end position="257"/>
    </location>
</feature>
<feature type="helix" evidence="7">
    <location>
        <begin position="264"/>
        <end position="271"/>
    </location>
</feature>
<feature type="turn" evidence="7">
    <location>
        <begin position="273"/>
        <end position="275"/>
    </location>
</feature>
<feature type="helix" evidence="7">
    <location>
        <begin position="276"/>
        <end position="281"/>
    </location>
</feature>
<feature type="turn" evidence="7">
    <location>
        <begin position="282"/>
        <end position="284"/>
    </location>
</feature>
<feature type="helix" evidence="7">
    <location>
        <begin position="286"/>
        <end position="300"/>
    </location>
</feature>
<feature type="turn" evidence="7">
    <location>
        <begin position="301"/>
        <end position="304"/>
    </location>
</feature>
<feature type="helix" evidence="7">
    <location>
        <begin position="307"/>
        <end position="309"/>
    </location>
</feature>
<feature type="strand" evidence="7">
    <location>
        <begin position="310"/>
        <end position="312"/>
    </location>
</feature>
<feature type="helix" evidence="7">
    <location>
        <begin position="314"/>
        <end position="316"/>
    </location>
</feature>
<feature type="helix" evidence="4">
    <location>
        <begin position="330"/>
        <end position="332"/>
    </location>
</feature>
<feature type="helix" evidence="7">
    <location>
        <begin position="335"/>
        <end position="337"/>
    </location>
</feature>
<feature type="strand" evidence="6">
    <location>
        <begin position="343"/>
        <end position="345"/>
    </location>
</feature>
<name>PER_ARTRA</name>
<dbReference type="EC" id="1.11.1.7"/>
<dbReference type="EMBL" id="D63792">
    <property type="protein sequence ID" value="BAA09861.1"/>
    <property type="molecule type" value="mRNA"/>
</dbReference>
<dbReference type="PIR" id="S22221">
    <property type="entry name" value="S22221"/>
</dbReference>
<dbReference type="PDB" id="1ARP">
    <property type="method" value="X-ray"/>
    <property type="resolution" value="1.90 A"/>
    <property type="chains" value="A=21-364"/>
</dbReference>
<dbReference type="PDB" id="1ARU">
    <property type="method" value="X-ray"/>
    <property type="resolution" value="1.60 A"/>
    <property type="chains" value="A=21-364"/>
</dbReference>
<dbReference type="PDB" id="1ARV">
    <property type="method" value="X-ray"/>
    <property type="resolution" value="1.60 A"/>
    <property type="chains" value="A=21-364"/>
</dbReference>
<dbReference type="PDB" id="1ARW">
    <property type="method" value="X-ray"/>
    <property type="resolution" value="1.60 A"/>
    <property type="chains" value="A=21-364"/>
</dbReference>
<dbReference type="PDB" id="1ARX">
    <property type="method" value="X-ray"/>
    <property type="resolution" value="1.90 A"/>
    <property type="chains" value="A=21-364"/>
</dbReference>
<dbReference type="PDB" id="1ARY">
    <property type="method" value="X-ray"/>
    <property type="resolution" value="1.90 A"/>
    <property type="chains" value="A=21-364"/>
</dbReference>
<dbReference type="PDB" id="1C8I">
    <property type="method" value="X-ray"/>
    <property type="resolution" value="2.00 A"/>
    <property type="chains" value="A=21-364"/>
</dbReference>
<dbReference type="PDB" id="1CK6">
    <property type="method" value="X-ray"/>
    <property type="resolution" value="1.90 A"/>
    <property type="chains" value="A=21-364"/>
</dbReference>
<dbReference type="PDB" id="1GZA">
    <property type="method" value="X-ray"/>
    <property type="resolution" value="2.06 A"/>
    <property type="chains" value="A=21-364"/>
</dbReference>
<dbReference type="PDB" id="1GZB">
    <property type="method" value="X-ray"/>
    <property type="resolution" value="1.80 A"/>
    <property type="chains" value="A=21-364"/>
</dbReference>
<dbReference type="PDB" id="1HSR">
    <property type="method" value="X-ray"/>
    <property type="resolution" value="1.60 A"/>
    <property type="chains" value="A=21-364"/>
</dbReference>
<dbReference type="PDB" id="2E39">
    <property type="method" value="X-ray"/>
    <property type="resolution" value="1.30 A"/>
    <property type="chains" value="A=21-364"/>
</dbReference>
<dbReference type="PDB" id="2E3A">
    <property type="method" value="X-ray"/>
    <property type="resolution" value="1.30 A"/>
    <property type="chains" value="A=21-364"/>
</dbReference>
<dbReference type="PDB" id="2E3B">
    <property type="method" value="X-ray"/>
    <property type="resolution" value="1.30 A"/>
    <property type="chains" value="A=21-364"/>
</dbReference>
<dbReference type="PDBsum" id="1ARP"/>
<dbReference type="PDBsum" id="1ARU"/>
<dbReference type="PDBsum" id="1ARV"/>
<dbReference type="PDBsum" id="1ARW"/>
<dbReference type="PDBsum" id="1ARX"/>
<dbReference type="PDBsum" id="1ARY"/>
<dbReference type="PDBsum" id="1C8I"/>
<dbReference type="PDBsum" id="1CK6"/>
<dbReference type="PDBsum" id="1GZA"/>
<dbReference type="PDBsum" id="1GZB"/>
<dbReference type="PDBsum" id="1HSR"/>
<dbReference type="PDBsum" id="2E39"/>
<dbReference type="PDBsum" id="2E3A"/>
<dbReference type="PDBsum" id="2E3B"/>
<dbReference type="SMR" id="P28313"/>
<dbReference type="CAZy" id="AA2">
    <property type="family name" value="Auxiliary Activities 2"/>
</dbReference>
<dbReference type="PeroxiBase" id="2404">
    <property type="entry name" value="ArCIIBA"/>
</dbReference>
<dbReference type="iPTMnet" id="P28313"/>
<dbReference type="BRENDA" id="1.11.1.7">
    <property type="organism ID" value="462"/>
</dbReference>
<dbReference type="EvolutionaryTrace" id="P28313"/>
<dbReference type="GO" id="GO:0005576">
    <property type="term" value="C:extracellular region"/>
    <property type="evidence" value="ECO:0007669"/>
    <property type="project" value="UniProtKB-SubCell"/>
</dbReference>
<dbReference type="GO" id="GO:0020037">
    <property type="term" value="F:heme binding"/>
    <property type="evidence" value="ECO:0007669"/>
    <property type="project" value="InterPro"/>
</dbReference>
<dbReference type="GO" id="GO:0140825">
    <property type="term" value="F:lactoperoxidase activity"/>
    <property type="evidence" value="ECO:0007669"/>
    <property type="project" value="UniProtKB-EC"/>
</dbReference>
<dbReference type="GO" id="GO:0046872">
    <property type="term" value="F:metal ion binding"/>
    <property type="evidence" value="ECO:0007669"/>
    <property type="project" value="UniProtKB-KW"/>
</dbReference>
<dbReference type="GO" id="GO:0034599">
    <property type="term" value="P:cellular response to oxidative stress"/>
    <property type="evidence" value="ECO:0007669"/>
    <property type="project" value="InterPro"/>
</dbReference>
<dbReference type="GO" id="GO:0042744">
    <property type="term" value="P:hydrogen peroxide catabolic process"/>
    <property type="evidence" value="ECO:0007669"/>
    <property type="project" value="UniProtKB-KW"/>
</dbReference>
<dbReference type="GO" id="GO:0000302">
    <property type="term" value="P:response to reactive oxygen species"/>
    <property type="evidence" value="ECO:0007669"/>
    <property type="project" value="TreeGrafter"/>
</dbReference>
<dbReference type="CDD" id="cd00692">
    <property type="entry name" value="ligninase"/>
    <property type="match status" value="1"/>
</dbReference>
<dbReference type="Gene3D" id="1.10.520.10">
    <property type="match status" value="1"/>
</dbReference>
<dbReference type="Gene3D" id="1.10.420.10">
    <property type="entry name" value="Peroxidase, domain 2"/>
    <property type="match status" value="1"/>
</dbReference>
<dbReference type="InterPro" id="IPR044831">
    <property type="entry name" value="Ccp1-like"/>
</dbReference>
<dbReference type="InterPro" id="IPR002016">
    <property type="entry name" value="Haem_peroxidase"/>
</dbReference>
<dbReference type="InterPro" id="IPR010255">
    <property type="entry name" value="Haem_peroxidase_sf"/>
</dbReference>
<dbReference type="InterPro" id="IPR001621">
    <property type="entry name" value="Ligninase"/>
</dbReference>
<dbReference type="InterPro" id="IPR024589">
    <property type="entry name" value="Ligninase_C"/>
</dbReference>
<dbReference type="InterPro" id="IPR019794">
    <property type="entry name" value="Peroxidases_AS"/>
</dbReference>
<dbReference type="InterPro" id="IPR019793">
    <property type="entry name" value="Peroxidases_heam-ligand_BS"/>
</dbReference>
<dbReference type="PANTHER" id="PTHR31356:SF66">
    <property type="entry name" value="CATALASE-PEROXIDASE"/>
    <property type="match status" value="1"/>
</dbReference>
<dbReference type="PANTHER" id="PTHR31356">
    <property type="entry name" value="THYLAKOID LUMENAL 29 KDA PROTEIN, CHLOROPLASTIC-RELATED"/>
    <property type="match status" value="1"/>
</dbReference>
<dbReference type="Pfam" id="PF00141">
    <property type="entry name" value="peroxidase"/>
    <property type="match status" value="1"/>
</dbReference>
<dbReference type="Pfam" id="PF11895">
    <property type="entry name" value="Peroxidase_ext"/>
    <property type="match status" value="1"/>
</dbReference>
<dbReference type="PRINTS" id="PR00462">
    <property type="entry name" value="LIGNINASE"/>
</dbReference>
<dbReference type="PRINTS" id="PR00458">
    <property type="entry name" value="PEROXIDASE"/>
</dbReference>
<dbReference type="SUPFAM" id="SSF48113">
    <property type="entry name" value="Heme-dependent peroxidases"/>
    <property type="match status" value="1"/>
</dbReference>
<dbReference type="PROSITE" id="PS00435">
    <property type="entry name" value="PEROXIDASE_1"/>
    <property type="match status" value="1"/>
</dbReference>
<dbReference type="PROSITE" id="PS00436">
    <property type="entry name" value="PEROXIDASE_2"/>
    <property type="match status" value="1"/>
</dbReference>
<dbReference type="PROSITE" id="PS50873">
    <property type="entry name" value="PEROXIDASE_4"/>
    <property type="match status" value="1"/>
</dbReference>
<evidence type="ECO:0000269" key="1">
    <source>
    </source>
</evidence>
<evidence type="ECO:0000269" key="2">
    <source>
    </source>
</evidence>
<evidence type="ECO:0000305" key="3"/>
<evidence type="ECO:0007829" key="4">
    <source>
        <dbReference type="PDB" id="1ARP"/>
    </source>
</evidence>
<evidence type="ECO:0007829" key="5">
    <source>
        <dbReference type="PDB" id="1ARU"/>
    </source>
</evidence>
<evidence type="ECO:0007829" key="6">
    <source>
        <dbReference type="PDB" id="1ARV"/>
    </source>
</evidence>
<evidence type="ECO:0007829" key="7">
    <source>
        <dbReference type="PDB" id="2E39"/>
    </source>
</evidence>
<comment type="catalytic activity">
    <reaction>
        <text>2 a phenolic donor + H2O2 = 2 a phenolic radical donor + 2 H2O</text>
        <dbReference type="Rhea" id="RHEA:56136"/>
        <dbReference type="ChEBI" id="CHEBI:15377"/>
        <dbReference type="ChEBI" id="CHEBI:16240"/>
        <dbReference type="ChEBI" id="CHEBI:139520"/>
        <dbReference type="ChEBI" id="CHEBI:139521"/>
        <dbReference type="EC" id="1.11.1.7"/>
    </reaction>
</comment>
<comment type="cofactor">
    <cofactor>
        <name>Ca(2+)</name>
        <dbReference type="ChEBI" id="CHEBI:29108"/>
    </cofactor>
    <text>Binds 2 calcium ions per subunit.</text>
</comment>
<comment type="cofactor">
    <cofactor>
        <name>heme b</name>
        <dbReference type="ChEBI" id="CHEBI:60344"/>
    </cofactor>
    <text>Binds 1 heme b (iron(II)-protoporphyrin IX) group per subunit.</text>
</comment>
<comment type="subcellular location">
    <subcellularLocation>
        <location>Secreted</location>
    </subcellularLocation>
</comment>
<comment type="similarity">
    <text evidence="3">Belongs to the peroxidase family. Ligninase subfamily.</text>
</comment>
<protein>
    <recommendedName>
        <fullName>Peroxidase</fullName>
        <ecNumber>1.11.1.7</ecNumber>
    </recommendedName>
</protein>
<proteinExistence type="evidence at protein level"/>
<organism>
    <name type="scientific">Arthromyces ramosus</name>
    <dbReference type="NCBI Taxonomy" id="5451"/>
    <lineage>
        <taxon>Eukaryota</taxon>
        <taxon>Fungi</taxon>
        <taxon>Dikarya</taxon>
        <taxon>Basidiomycota</taxon>
        <taxon>Agaricomycotina</taxon>
        <taxon>Agaricomycetes</taxon>
        <taxon>Agaricomycetidae</taxon>
        <taxon>Agaricales</taxon>
    </lineage>
</organism>